<reference key="1">
    <citation type="submission" date="1998-06" db="EMBL/GenBank/DDBJ databases">
        <title>Molecular characterization of luxCDABE insertions in the genome of Yersinia enterocolitica.</title>
        <authorList>
            <person name="Dickinson J.H."/>
            <person name="Francis K.P."/>
            <person name="Holden M.T.G."/>
            <person name="Stewart G.S.A.B."/>
        </authorList>
    </citation>
    <scope>NUCLEOTIDE SEQUENCE [GENOMIC DNA]</scope>
    <source>
        <strain>NCTC 10460</strain>
    </source>
</reference>
<protein>
    <recommendedName>
        <fullName>Cold shock-like protein CspB</fullName>
    </recommendedName>
</protein>
<feature type="chain" id="PRO_0000100344" description="Cold shock-like protein CspB">
    <location>
        <begin position="1"/>
        <end position="70"/>
    </location>
</feature>
<feature type="domain" description="CSD">
    <location>
        <begin position="7"/>
        <end position="67"/>
    </location>
</feature>
<organism>
    <name type="scientific">Yersinia enterocolitica</name>
    <dbReference type="NCBI Taxonomy" id="630"/>
    <lineage>
        <taxon>Bacteria</taxon>
        <taxon>Pseudomonadati</taxon>
        <taxon>Pseudomonadota</taxon>
        <taxon>Gammaproteobacteria</taxon>
        <taxon>Enterobacterales</taxon>
        <taxon>Yersiniaceae</taxon>
        <taxon>Yersinia</taxon>
    </lineage>
</organism>
<accession>P0A363</accession>
<accession>O85593</accession>
<name>CSPB_YEREN</name>
<dbReference type="EMBL" id="AF070484">
    <property type="protein sequence ID" value="AAC24037.1"/>
    <property type="molecule type" value="Genomic_DNA"/>
</dbReference>
<dbReference type="SMR" id="P0A363"/>
<dbReference type="STRING" id="1443113.LC20_00557"/>
<dbReference type="eggNOG" id="COG1278">
    <property type="taxonomic scope" value="Bacteria"/>
</dbReference>
<dbReference type="OMA" id="RAIQTQG"/>
<dbReference type="GO" id="GO:0005829">
    <property type="term" value="C:cytosol"/>
    <property type="evidence" value="ECO:0007669"/>
    <property type="project" value="UniProtKB-ARBA"/>
</dbReference>
<dbReference type="GO" id="GO:0003677">
    <property type="term" value="F:DNA binding"/>
    <property type="evidence" value="ECO:0007669"/>
    <property type="project" value="UniProtKB-KW"/>
</dbReference>
<dbReference type="CDD" id="cd04458">
    <property type="entry name" value="CSP_CDS"/>
    <property type="match status" value="1"/>
</dbReference>
<dbReference type="FunFam" id="2.40.50.140:FF:000006">
    <property type="entry name" value="Cold shock protein CspC"/>
    <property type="match status" value="1"/>
</dbReference>
<dbReference type="Gene3D" id="2.40.50.140">
    <property type="entry name" value="Nucleic acid-binding proteins"/>
    <property type="match status" value="1"/>
</dbReference>
<dbReference type="InterPro" id="IPR012156">
    <property type="entry name" value="Cold_shock_CspA"/>
</dbReference>
<dbReference type="InterPro" id="IPR050181">
    <property type="entry name" value="Cold_shock_domain"/>
</dbReference>
<dbReference type="InterPro" id="IPR011129">
    <property type="entry name" value="CSD"/>
</dbReference>
<dbReference type="InterPro" id="IPR019844">
    <property type="entry name" value="CSD_CS"/>
</dbReference>
<dbReference type="InterPro" id="IPR002059">
    <property type="entry name" value="CSP_DNA-bd"/>
</dbReference>
<dbReference type="InterPro" id="IPR012340">
    <property type="entry name" value="NA-bd_OB-fold"/>
</dbReference>
<dbReference type="NCBIfam" id="NF007679">
    <property type="entry name" value="PRK10354.1"/>
    <property type="match status" value="1"/>
</dbReference>
<dbReference type="PANTHER" id="PTHR11544">
    <property type="entry name" value="COLD SHOCK DOMAIN CONTAINING PROTEINS"/>
    <property type="match status" value="1"/>
</dbReference>
<dbReference type="Pfam" id="PF00313">
    <property type="entry name" value="CSD"/>
    <property type="match status" value="1"/>
</dbReference>
<dbReference type="PIRSF" id="PIRSF002599">
    <property type="entry name" value="Cold_shock_A"/>
    <property type="match status" value="1"/>
</dbReference>
<dbReference type="PRINTS" id="PR00050">
    <property type="entry name" value="COLDSHOCK"/>
</dbReference>
<dbReference type="SMART" id="SM00357">
    <property type="entry name" value="CSP"/>
    <property type="match status" value="1"/>
</dbReference>
<dbReference type="SUPFAM" id="SSF50249">
    <property type="entry name" value="Nucleic acid-binding proteins"/>
    <property type="match status" value="1"/>
</dbReference>
<dbReference type="PROSITE" id="PS00352">
    <property type="entry name" value="CSD_1"/>
    <property type="match status" value="1"/>
</dbReference>
<dbReference type="PROSITE" id="PS51857">
    <property type="entry name" value="CSD_2"/>
    <property type="match status" value="1"/>
</dbReference>
<gene>
    <name type="primary">cspB</name>
    <name type="synonym">cspG</name>
</gene>
<comment type="subcellular location">
    <subcellularLocation>
        <location evidence="1">Cytoplasm</location>
    </subcellularLocation>
</comment>
<keyword id="KW-0010">Activator</keyword>
<keyword id="KW-0963">Cytoplasm</keyword>
<keyword id="KW-0238">DNA-binding</keyword>
<keyword id="KW-0804">Transcription</keyword>
<keyword id="KW-0805">Transcription regulation</keyword>
<proteinExistence type="inferred from homology"/>
<evidence type="ECO:0000250" key="1"/>
<sequence>MSNKMTGLVKWFDAGKGFGFISPADGSKDVFVHFSAIQGNDYKTLDEGQNVEFSIEQGQKGPSAVNVVAL</sequence>